<accession>B5FIT8</accession>
<gene>
    <name evidence="1" type="primary">argR</name>
    <name type="ordered locus">SeD_A3720</name>
</gene>
<keyword id="KW-0028">Amino-acid biosynthesis</keyword>
<keyword id="KW-0055">Arginine biosynthesis</keyword>
<keyword id="KW-0963">Cytoplasm</keyword>
<keyword id="KW-0238">DNA-binding</keyword>
<keyword id="KW-0678">Repressor</keyword>
<keyword id="KW-0804">Transcription</keyword>
<keyword id="KW-0805">Transcription regulation</keyword>
<name>ARGR_SALDC</name>
<dbReference type="EMBL" id="CP001144">
    <property type="protein sequence ID" value="ACH73665.1"/>
    <property type="molecule type" value="Genomic_DNA"/>
</dbReference>
<dbReference type="RefSeq" id="WP_001257852.1">
    <property type="nucleotide sequence ID" value="NC_011205.1"/>
</dbReference>
<dbReference type="SMR" id="B5FIT8"/>
<dbReference type="KEGG" id="sed:SeD_A3720"/>
<dbReference type="HOGENOM" id="CLU_097103_2_0_6"/>
<dbReference type="UniPathway" id="UPA00068"/>
<dbReference type="Proteomes" id="UP000008322">
    <property type="component" value="Chromosome"/>
</dbReference>
<dbReference type="GO" id="GO:0005737">
    <property type="term" value="C:cytoplasm"/>
    <property type="evidence" value="ECO:0007669"/>
    <property type="project" value="UniProtKB-SubCell"/>
</dbReference>
<dbReference type="GO" id="GO:0034618">
    <property type="term" value="F:arginine binding"/>
    <property type="evidence" value="ECO:0007669"/>
    <property type="project" value="InterPro"/>
</dbReference>
<dbReference type="GO" id="GO:0003677">
    <property type="term" value="F:DNA binding"/>
    <property type="evidence" value="ECO:0007669"/>
    <property type="project" value="UniProtKB-KW"/>
</dbReference>
<dbReference type="GO" id="GO:0003700">
    <property type="term" value="F:DNA-binding transcription factor activity"/>
    <property type="evidence" value="ECO:0007669"/>
    <property type="project" value="UniProtKB-UniRule"/>
</dbReference>
<dbReference type="GO" id="GO:0006526">
    <property type="term" value="P:L-arginine biosynthetic process"/>
    <property type="evidence" value="ECO:0007669"/>
    <property type="project" value="UniProtKB-UniPathway"/>
</dbReference>
<dbReference type="GO" id="GO:0051259">
    <property type="term" value="P:protein complex oligomerization"/>
    <property type="evidence" value="ECO:0007669"/>
    <property type="project" value="InterPro"/>
</dbReference>
<dbReference type="GO" id="GO:1900079">
    <property type="term" value="P:regulation of arginine biosynthetic process"/>
    <property type="evidence" value="ECO:0007669"/>
    <property type="project" value="UniProtKB-UniRule"/>
</dbReference>
<dbReference type="FunFam" id="1.10.10.10:FF:000074">
    <property type="entry name" value="Arginine repressor"/>
    <property type="match status" value="1"/>
</dbReference>
<dbReference type="FunFam" id="3.30.1360.40:FF:000004">
    <property type="entry name" value="Arginine repressor"/>
    <property type="match status" value="1"/>
</dbReference>
<dbReference type="Gene3D" id="3.30.1360.40">
    <property type="match status" value="1"/>
</dbReference>
<dbReference type="Gene3D" id="1.10.10.10">
    <property type="entry name" value="Winged helix-like DNA-binding domain superfamily/Winged helix DNA-binding domain"/>
    <property type="match status" value="1"/>
</dbReference>
<dbReference type="HAMAP" id="MF_00173">
    <property type="entry name" value="Arg_repressor"/>
    <property type="match status" value="1"/>
</dbReference>
<dbReference type="InterPro" id="IPR001669">
    <property type="entry name" value="Arg_repress"/>
</dbReference>
<dbReference type="InterPro" id="IPR020899">
    <property type="entry name" value="Arg_repress_C"/>
</dbReference>
<dbReference type="InterPro" id="IPR036251">
    <property type="entry name" value="Arg_repress_C_sf"/>
</dbReference>
<dbReference type="InterPro" id="IPR020900">
    <property type="entry name" value="Arg_repress_DNA-bd"/>
</dbReference>
<dbReference type="InterPro" id="IPR036388">
    <property type="entry name" value="WH-like_DNA-bd_sf"/>
</dbReference>
<dbReference type="InterPro" id="IPR036390">
    <property type="entry name" value="WH_DNA-bd_sf"/>
</dbReference>
<dbReference type="NCBIfam" id="TIGR01529">
    <property type="entry name" value="argR_whole"/>
    <property type="match status" value="1"/>
</dbReference>
<dbReference type="NCBIfam" id="NF003457">
    <property type="entry name" value="PRK05066.1"/>
    <property type="match status" value="1"/>
</dbReference>
<dbReference type="PANTHER" id="PTHR34471">
    <property type="entry name" value="ARGININE REPRESSOR"/>
    <property type="match status" value="1"/>
</dbReference>
<dbReference type="PANTHER" id="PTHR34471:SF1">
    <property type="entry name" value="ARGININE REPRESSOR"/>
    <property type="match status" value="1"/>
</dbReference>
<dbReference type="Pfam" id="PF01316">
    <property type="entry name" value="Arg_repressor"/>
    <property type="match status" value="1"/>
</dbReference>
<dbReference type="Pfam" id="PF02863">
    <property type="entry name" value="Arg_repressor_C"/>
    <property type="match status" value="1"/>
</dbReference>
<dbReference type="PRINTS" id="PR01467">
    <property type="entry name" value="ARGREPRESSOR"/>
</dbReference>
<dbReference type="SUPFAM" id="SSF55252">
    <property type="entry name" value="C-terminal domain of arginine repressor"/>
    <property type="match status" value="1"/>
</dbReference>
<dbReference type="SUPFAM" id="SSF46785">
    <property type="entry name" value="Winged helix' DNA-binding domain"/>
    <property type="match status" value="1"/>
</dbReference>
<proteinExistence type="inferred from homology"/>
<comment type="function">
    <text evidence="1">Regulates arginine biosynthesis genes.</text>
</comment>
<comment type="pathway">
    <text>Amino-acid biosynthesis; L-arginine biosynthesis [regulation].</text>
</comment>
<comment type="subcellular location">
    <subcellularLocation>
        <location evidence="1">Cytoplasm</location>
    </subcellularLocation>
</comment>
<comment type="similarity">
    <text evidence="1">Belongs to the ArgR family.</text>
</comment>
<protein>
    <recommendedName>
        <fullName evidence="1">Arginine repressor</fullName>
    </recommendedName>
</protein>
<sequence>MRSSAKQEELVRAFKALLKEEKFSSQGEIVLALQDQGFENINQSKVSRMLTKFGAVRTRNAKMEMVYCLPAELGVPTTSSPLKNLVLDIDYNDAVVVIHTSPGAAQLIARLLDSLGKAEGILGTIAGDDTIFTTPASGFSVRDLYEAILELFEQEL</sequence>
<evidence type="ECO:0000255" key="1">
    <source>
        <dbReference type="HAMAP-Rule" id="MF_00173"/>
    </source>
</evidence>
<reference key="1">
    <citation type="journal article" date="2011" name="J. Bacteriol.">
        <title>Comparative genomics of 28 Salmonella enterica isolates: evidence for CRISPR-mediated adaptive sublineage evolution.</title>
        <authorList>
            <person name="Fricke W.F."/>
            <person name="Mammel M.K."/>
            <person name="McDermott P.F."/>
            <person name="Tartera C."/>
            <person name="White D.G."/>
            <person name="Leclerc J.E."/>
            <person name="Ravel J."/>
            <person name="Cebula T.A."/>
        </authorList>
    </citation>
    <scope>NUCLEOTIDE SEQUENCE [LARGE SCALE GENOMIC DNA]</scope>
    <source>
        <strain>CT_02021853</strain>
    </source>
</reference>
<feature type="chain" id="PRO_1000097881" description="Arginine repressor">
    <location>
        <begin position="1"/>
        <end position="156"/>
    </location>
</feature>
<organism>
    <name type="scientific">Salmonella dublin (strain CT_02021853)</name>
    <dbReference type="NCBI Taxonomy" id="439851"/>
    <lineage>
        <taxon>Bacteria</taxon>
        <taxon>Pseudomonadati</taxon>
        <taxon>Pseudomonadota</taxon>
        <taxon>Gammaproteobacteria</taxon>
        <taxon>Enterobacterales</taxon>
        <taxon>Enterobacteriaceae</taxon>
        <taxon>Salmonella</taxon>
    </lineage>
</organism>